<accession>O66466</accession>
<feature type="chain" id="PRO_0000186835" description="Uncharacterized protein aq_054">
    <location>
        <begin position="1"/>
        <end position="205"/>
    </location>
</feature>
<feature type="transmembrane region" description="Helical" evidence="1">
    <location>
        <begin position="5"/>
        <end position="27"/>
    </location>
</feature>
<proteinExistence type="predicted"/>
<sequence length="205" mass="24098">MNTEIIVLFIIHFIMINENVFIALLHYPAMDKDGKIIVTSFTTMDLHDIARPARAYEINKYYIVQPIDAQRIVIQRQINYWLSEEGRKANPTRYEIVQLVRLAYTLDEVIEDIEKERGRRPLLVGTDARTYPNTVKYSWLRNEIQKRDRDWLIVFGTGHGIPPDLMNTFDYILEPIYGAGDWNHLSVRNAVAIILDRLFSRNRCD</sequence>
<protein>
    <recommendedName>
        <fullName>Uncharacterized protein aq_054</fullName>
    </recommendedName>
</protein>
<organism>
    <name type="scientific">Aquifex aeolicus (strain VF5)</name>
    <dbReference type="NCBI Taxonomy" id="224324"/>
    <lineage>
        <taxon>Bacteria</taxon>
        <taxon>Pseudomonadati</taxon>
        <taxon>Aquificota</taxon>
        <taxon>Aquificia</taxon>
        <taxon>Aquificales</taxon>
        <taxon>Aquificaceae</taxon>
        <taxon>Aquifex</taxon>
    </lineage>
</organism>
<keyword id="KW-0472">Membrane</keyword>
<keyword id="KW-1185">Reference proteome</keyword>
<keyword id="KW-0812">Transmembrane</keyword>
<keyword id="KW-1133">Transmembrane helix</keyword>
<reference key="1">
    <citation type="journal article" date="1998" name="Nature">
        <title>The complete genome of the hyperthermophilic bacterium Aquifex aeolicus.</title>
        <authorList>
            <person name="Deckert G."/>
            <person name="Warren P.V."/>
            <person name="Gaasterland T."/>
            <person name="Young W.G."/>
            <person name="Lenox A.L."/>
            <person name="Graham D.E."/>
            <person name="Overbeek R."/>
            <person name="Snead M.A."/>
            <person name="Keller M."/>
            <person name="Aujay M."/>
            <person name="Huber R."/>
            <person name="Feldman R.A."/>
            <person name="Short J.M."/>
            <person name="Olsen G.J."/>
            <person name="Swanson R.V."/>
        </authorList>
    </citation>
    <scope>NUCLEOTIDE SEQUENCE [LARGE SCALE GENOMIC DNA]</scope>
    <source>
        <strain>VF5</strain>
    </source>
</reference>
<comment type="subcellular location">
    <subcellularLocation>
        <location evidence="2">Membrane</location>
        <topology evidence="2">Single-pass membrane protein</topology>
    </subcellularLocation>
</comment>
<comment type="similarity">
    <text evidence="2">To T.maritima TM1570.</text>
</comment>
<gene>
    <name type="ordered locus">aq_054</name>
</gene>
<dbReference type="EMBL" id="AE000657">
    <property type="protein sequence ID" value="AAC06431.1"/>
    <property type="molecule type" value="Genomic_DNA"/>
</dbReference>
<dbReference type="PIR" id="G70304">
    <property type="entry name" value="G70304"/>
</dbReference>
<dbReference type="RefSeq" id="NP_213026.1">
    <property type="nucleotide sequence ID" value="NC_000918.1"/>
</dbReference>
<dbReference type="SMR" id="O66466"/>
<dbReference type="STRING" id="224324.aq_054"/>
<dbReference type="EnsemblBacteria" id="AAC06431">
    <property type="protein sequence ID" value="AAC06431"/>
    <property type="gene ID" value="aq_054"/>
</dbReference>
<dbReference type="KEGG" id="aae:aq_054"/>
<dbReference type="PATRIC" id="fig|224324.8.peg.42"/>
<dbReference type="eggNOG" id="COG4752">
    <property type="taxonomic scope" value="Bacteria"/>
</dbReference>
<dbReference type="HOGENOM" id="CLU_1414575_0_0_0"/>
<dbReference type="InParanoid" id="O66466"/>
<dbReference type="OrthoDB" id="9794931at2"/>
<dbReference type="Proteomes" id="UP000000798">
    <property type="component" value="Chromosome"/>
</dbReference>
<dbReference type="GO" id="GO:0016020">
    <property type="term" value="C:membrane"/>
    <property type="evidence" value="ECO:0007669"/>
    <property type="project" value="UniProtKB-SubCell"/>
</dbReference>
<dbReference type="CDD" id="cd18085">
    <property type="entry name" value="TM1570-like"/>
    <property type="match status" value="1"/>
</dbReference>
<dbReference type="Gene3D" id="3.40.1280.10">
    <property type="match status" value="1"/>
</dbReference>
<dbReference type="InterPro" id="IPR029028">
    <property type="entry name" value="Alpha/beta_knot_MTases"/>
</dbReference>
<dbReference type="InterPro" id="IPR019230">
    <property type="entry name" value="RNA_MeTrfase_C_dom"/>
</dbReference>
<dbReference type="InterPro" id="IPR029026">
    <property type="entry name" value="tRNA_m1G_MTases_N"/>
</dbReference>
<dbReference type="Pfam" id="PF09936">
    <property type="entry name" value="Methyltrn_RNA_4"/>
    <property type="match status" value="1"/>
</dbReference>
<dbReference type="SUPFAM" id="SSF75217">
    <property type="entry name" value="alpha/beta knot"/>
    <property type="match status" value="1"/>
</dbReference>
<evidence type="ECO:0000255" key="1"/>
<evidence type="ECO:0000305" key="2"/>
<name>Y054_AQUAE</name>